<reference key="1">
    <citation type="journal article" date="2003" name="Hum. Mol. Genet.">
        <title>Mutations in a novel gene dymeclin (FLJ20071) are responsible for Dyggve-Melchior-Clausen syndrome.</title>
        <authorList>
            <person name="El Ghouzzi V."/>
            <person name="Dagoneau N."/>
            <person name="Kinning E."/>
            <person name="Thauvin-Robinet C."/>
            <person name="Chemaitilly W."/>
            <person name="Prost-Squarcioni C."/>
            <person name="Al-Gazali L.I."/>
            <person name="Verloes A."/>
            <person name="Le Merrer M."/>
            <person name="Munnich A."/>
            <person name="Trembath R.C."/>
            <person name="Cormier-Daire V."/>
        </authorList>
    </citation>
    <scope>NUCLEOTIDE SEQUENCE [GENOMIC DNA]</scope>
    <scope>INVOLVEMENT IN DMC</scope>
    <scope>TISSUE SPECIFICITY</scope>
</reference>
<reference key="2">
    <citation type="journal article" date="2004" name="Nat. Genet.">
        <title>Complete sequencing and characterization of 21,243 full-length human cDNAs.</title>
        <authorList>
            <person name="Ota T."/>
            <person name="Suzuki Y."/>
            <person name="Nishikawa T."/>
            <person name="Otsuki T."/>
            <person name="Sugiyama T."/>
            <person name="Irie R."/>
            <person name="Wakamatsu A."/>
            <person name="Hayashi K."/>
            <person name="Sato H."/>
            <person name="Nagai K."/>
            <person name="Kimura K."/>
            <person name="Makita H."/>
            <person name="Sekine M."/>
            <person name="Obayashi M."/>
            <person name="Nishi T."/>
            <person name="Shibahara T."/>
            <person name="Tanaka T."/>
            <person name="Ishii S."/>
            <person name="Yamamoto J."/>
            <person name="Saito K."/>
            <person name="Kawai Y."/>
            <person name="Isono Y."/>
            <person name="Nakamura Y."/>
            <person name="Nagahari K."/>
            <person name="Murakami K."/>
            <person name="Yasuda T."/>
            <person name="Iwayanagi T."/>
            <person name="Wagatsuma M."/>
            <person name="Shiratori A."/>
            <person name="Sudo H."/>
            <person name="Hosoiri T."/>
            <person name="Kaku Y."/>
            <person name="Kodaira H."/>
            <person name="Kondo H."/>
            <person name="Sugawara M."/>
            <person name="Takahashi M."/>
            <person name="Kanda K."/>
            <person name="Yokoi T."/>
            <person name="Furuya T."/>
            <person name="Kikkawa E."/>
            <person name="Omura Y."/>
            <person name="Abe K."/>
            <person name="Kamihara K."/>
            <person name="Katsuta N."/>
            <person name="Sato K."/>
            <person name="Tanikawa M."/>
            <person name="Yamazaki M."/>
            <person name="Ninomiya K."/>
            <person name="Ishibashi T."/>
            <person name="Yamashita H."/>
            <person name="Murakawa K."/>
            <person name="Fujimori K."/>
            <person name="Tanai H."/>
            <person name="Kimata M."/>
            <person name="Watanabe M."/>
            <person name="Hiraoka S."/>
            <person name="Chiba Y."/>
            <person name="Ishida S."/>
            <person name="Ono Y."/>
            <person name="Takiguchi S."/>
            <person name="Watanabe S."/>
            <person name="Yosida M."/>
            <person name="Hotuta T."/>
            <person name="Kusano J."/>
            <person name="Kanehori K."/>
            <person name="Takahashi-Fujii A."/>
            <person name="Hara H."/>
            <person name="Tanase T.-O."/>
            <person name="Nomura Y."/>
            <person name="Togiya S."/>
            <person name="Komai F."/>
            <person name="Hara R."/>
            <person name="Takeuchi K."/>
            <person name="Arita M."/>
            <person name="Imose N."/>
            <person name="Musashino K."/>
            <person name="Yuuki H."/>
            <person name="Oshima A."/>
            <person name="Sasaki N."/>
            <person name="Aotsuka S."/>
            <person name="Yoshikawa Y."/>
            <person name="Matsunawa H."/>
            <person name="Ichihara T."/>
            <person name="Shiohata N."/>
            <person name="Sano S."/>
            <person name="Moriya S."/>
            <person name="Momiyama H."/>
            <person name="Satoh N."/>
            <person name="Takami S."/>
            <person name="Terashima Y."/>
            <person name="Suzuki O."/>
            <person name="Nakagawa S."/>
            <person name="Senoh A."/>
            <person name="Mizoguchi H."/>
            <person name="Goto Y."/>
            <person name="Shimizu F."/>
            <person name="Wakebe H."/>
            <person name="Hishigaki H."/>
            <person name="Watanabe T."/>
            <person name="Sugiyama A."/>
            <person name="Takemoto M."/>
            <person name="Kawakami B."/>
            <person name="Yamazaki M."/>
            <person name="Watanabe K."/>
            <person name="Kumagai A."/>
            <person name="Itakura S."/>
            <person name="Fukuzumi Y."/>
            <person name="Fujimori Y."/>
            <person name="Komiyama M."/>
            <person name="Tashiro H."/>
            <person name="Tanigami A."/>
            <person name="Fujiwara T."/>
            <person name="Ono T."/>
            <person name="Yamada K."/>
            <person name="Fujii Y."/>
            <person name="Ozaki K."/>
            <person name="Hirao M."/>
            <person name="Ohmori Y."/>
            <person name="Kawabata A."/>
            <person name="Hikiji T."/>
            <person name="Kobatake N."/>
            <person name="Inagaki H."/>
            <person name="Ikema Y."/>
            <person name="Okamoto S."/>
            <person name="Okitani R."/>
            <person name="Kawakami T."/>
            <person name="Noguchi S."/>
            <person name="Itoh T."/>
            <person name="Shigeta K."/>
            <person name="Senba T."/>
            <person name="Matsumura K."/>
            <person name="Nakajima Y."/>
            <person name="Mizuno T."/>
            <person name="Morinaga M."/>
            <person name="Sasaki M."/>
            <person name="Togashi T."/>
            <person name="Oyama M."/>
            <person name="Hata H."/>
            <person name="Watanabe M."/>
            <person name="Komatsu T."/>
            <person name="Mizushima-Sugano J."/>
            <person name="Satoh T."/>
            <person name="Shirai Y."/>
            <person name="Takahashi Y."/>
            <person name="Nakagawa K."/>
            <person name="Okumura K."/>
            <person name="Nagase T."/>
            <person name="Nomura N."/>
            <person name="Kikuchi H."/>
            <person name="Masuho Y."/>
            <person name="Yamashita R."/>
            <person name="Nakai K."/>
            <person name="Yada T."/>
            <person name="Nakamura Y."/>
            <person name="Ohara O."/>
            <person name="Isogai T."/>
            <person name="Sugano S."/>
        </authorList>
    </citation>
    <scope>NUCLEOTIDE SEQUENCE [LARGE SCALE MRNA] (ISOFORMS 1 AND 2)</scope>
    <source>
        <tissue>Cervix</tissue>
        <tissue>Testis</tissue>
        <tissue>Tongue</tissue>
    </source>
</reference>
<reference key="3">
    <citation type="submission" date="2005-07" db="EMBL/GenBank/DDBJ databases">
        <authorList>
            <person name="Mural R.J."/>
            <person name="Istrail S."/>
            <person name="Sutton G.G."/>
            <person name="Florea L."/>
            <person name="Halpern A.L."/>
            <person name="Mobarry C.M."/>
            <person name="Lippert R."/>
            <person name="Walenz B."/>
            <person name="Shatkay H."/>
            <person name="Dew I."/>
            <person name="Miller J.R."/>
            <person name="Flanigan M.J."/>
            <person name="Edwards N.J."/>
            <person name="Bolanos R."/>
            <person name="Fasulo D."/>
            <person name="Halldorsson B.V."/>
            <person name="Hannenhalli S."/>
            <person name="Turner R."/>
            <person name="Yooseph S."/>
            <person name="Lu F."/>
            <person name="Nusskern D.R."/>
            <person name="Shue B.C."/>
            <person name="Zheng X.H."/>
            <person name="Zhong F."/>
            <person name="Delcher A.L."/>
            <person name="Huson D.H."/>
            <person name="Kravitz S.A."/>
            <person name="Mouchard L."/>
            <person name="Reinert K."/>
            <person name="Remington K.A."/>
            <person name="Clark A.G."/>
            <person name="Waterman M.S."/>
            <person name="Eichler E.E."/>
            <person name="Adams M.D."/>
            <person name="Hunkapiller M.W."/>
            <person name="Myers E.W."/>
            <person name="Venter J.C."/>
        </authorList>
    </citation>
    <scope>NUCLEOTIDE SEQUENCE [LARGE SCALE GENOMIC DNA]</scope>
</reference>
<reference key="4">
    <citation type="journal article" date="2004" name="Genome Res.">
        <title>The status, quality, and expansion of the NIH full-length cDNA project: the Mammalian Gene Collection (MGC).</title>
        <authorList>
            <consortium name="The MGC Project Team"/>
        </authorList>
    </citation>
    <scope>NUCLEOTIDE SEQUENCE [LARGE SCALE MRNA] (ISOFORM 1)</scope>
    <source>
        <tissue>Brain</tissue>
        <tissue>Cervix</tissue>
    </source>
</reference>
<reference key="5">
    <citation type="submission" date="2003-08" db="EMBL/GenBank/DDBJ databases">
        <title>Characterization of human proteins containing evolutionary conserved domains of unknown function.</title>
        <authorList>
            <person name="Kemmer D."/>
            <person name="Podowski R."/>
            <person name="Hodges E."/>
            <person name="Roth P."/>
            <person name="Lenhard B."/>
            <person name="Sonnhammer E.L.L."/>
            <person name="Wasserman W.W."/>
            <person name="Hoog C."/>
        </authorList>
    </citation>
    <scope>NUCLEOTIDE SEQUENCE [MRNA] OF 1-524 (ISOFORM 1)</scope>
</reference>
<reference key="6">
    <citation type="journal article" date="2007" name="BMC Genomics">
        <title>The full-ORF clone resource of the German cDNA consortium.</title>
        <authorList>
            <person name="Bechtel S."/>
            <person name="Rosenfelder H."/>
            <person name="Duda A."/>
            <person name="Schmidt C.P."/>
            <person name="Ernst U."/>
            <person name="Wellenreuther R."/>
            <person name="Mehrle A."/>
            <person name="Schuster C."/>
            <person name="Bahr A."/>
            <person name="Bloecker H."/>
            <person name="Heubner D."/>
            <person name="Hoerlein A."/>
            <person name="Michel G."/>
            <person name="Wedler H."/>
            <person name="Koehrer K."/>
            <person name="Ottenwaelder B."/>
            <person name="Poustka A."/>
            <person name="Wiemann S."/>
            <person name="Schupp I."/>
        </authorList>
    </citation>
    <scope>NUCLEOTIDE SEQUENCE [LARGE SCALE MRNA] OF 446-669</scope>
    <source>
        <tissue>Melanoma</tissue>
    </source>
</reference>
<reference key="7">
    <citation type="journal article" date="2009" name="Hum. Mol. Genet.">
        <title>The gene responsible for Dyggve-Melchior-Clausen syndrome encodes a novel peripheral membrane protein dynamically associated with the Golgi apparatus.</title>
        <authorList>
            <person name="Dimitrov A."/>
            <person name="Paupe V."/>
            <person name="Gueudry C."/>
            <person name="Sibarita J.-B."/>
            <person name="Raposo G."/>
            <person name="Vielemeyer O."/>
            <person name="Gilbert T."/>
            <person name="Csaba Z."/>
            <person name="Attie-Bitach T."/>
            <person name="Cormier-Daire V."/>
            <person name="Gressens P."/>
            <person name="Rustin P."/>
            <person name="Perez F."/>
            <person name="El Ghouzzi V."/>
        </authorList>
    </citation>
    <scope>TISSUE SPECIFICITY</scope>
    <scope>SUBCELLULAR LOCATION</scope>
    <scope>MYRISTOYLATION AT GLY-2</scope>
    <scope>MUTAGENESIS OF GLY-2</scope>
    <scope>CHARACTERIZATION OF VARIANT SMC1 LYS-87</scope>
    <scope>CHARACTERIZATION OF VARIANT DMC TYR-469</scope>
</reference>
<reference key="8">
    <citation type="journal article" date="2011" name="Hum. Mutat.">
        <title>Dymeclin, the gene underlying Dyggve-Melchior-Clausen syndrome, encodes a protein integral to extracellular matrix and Golgi organization and is associated with protein secretion pathways critical in bone development.</title>
        <authorList>
            <person name="Denais C."/>
            <person name="Dent C.L."/>
            <person name="Southgate L."/>
            <person name="Hoyle J."/>
            <person name="Dafou D."/>
            <person name="Trembath R.C."/>
            <person name="Machado R.D."/>
        </authorList>
    </citation>
    <scope>FUNCTION</scope>
    <scope>SUBCELLULAR LOCATION</scope>
    <scope>INTERACTION WITH GOLM1 AND PPIB</scope>
    <scope>INVOLVEMENT IN DCM</scope>
</reference>
<reference key="9">
    <citation type="journal article" date="2014" name="Nat. Commun.">
        <title>Global profiling of co- and post-translationally N-myristoylated proteomes in human cells.</title>
        <authorList>
            <person name="Thinon E."/>
            <person name="Serwa R.A."/>
            <person name="Broncel M."/>
            <person name="Brannigan J.A."/>
            <person name="Brassat U."/>
            <person name="Wright M.H."/>
            <person name="Heal W.P."/>
            <person name="Wilkinson A.J."/>
            <person name="Mann D.J."/>
            <person name="Tate E.W."/>
        </authorList>
    </citation>
    <scope>MYRISTOYLATION AT GLY-2</scope>
    <scope>CLEAVAGE OF INITIATOR METHIONINE</scope>
    <scope>IDENTIFICATION BY MASS SPECTROMETRY</scope>
</reference>
<reference key="10">
    <citation type="journal article" date="2003" name="Am. J. Hum. Genet.">
        <title>Mental retardation and abnormal skeletal development (Dyggve-Melchior-Clausen dysplasia) due to mutations in a novel, evolutionarily conserved gene.</title>
        <authorList>
            <person name="Cohn D.H."/>
            <person name="Ehtesham N."/>
            <person name="Krakow D."/>
            <person name="Unger S."/>
            <person name="Shanske A."/>
            <person name="Reinker K."/>
            <person name="Powell B.R."/>
            <person name="Rimoin D.L."/>
        </authorList>
    </citation>
    <scope>VARIANT DMC TYR-469</scope>
    <scope>VARIANT SMC1 LYS-87</scope>
</reference>
<reference key="11">
    <citation type="journal article" date="2009" name="Clin. Dysmorphol.">
        <title>Portuguese case of Smith-McCort syndrome caused by a new mutation in the dymeclin (FLJ20071) gene.</title>
        <authorList>
            <person name="Santos H.G."/>
            <person name="Fernandes H.C."/>
            <person name="Nunes J.L."/>
            <person name="Almeida M.R."/>
        </authorList>
    </citation>
    <scope>VARIANT SMC1 ARG-542</scope>
</reference>
<proteinExistence type="evidence at protein level"/>
<organism>
    <name type="scientific">Homo sapiens</name>
    <name type="common">Human</name>
    <dbReference type="NCBI Taxonomy" id="9606"/>
    <lineage>
        <taxon>Eukaryota</taxon>
        <taxon>Metazoa</taxon>
        <taxon>Chordata</taxon>
        <taxon>Craniata</taxon>
        <taxon>Vertebrata</taxon>
        <taxon>Euteleostomi</taxon>
        <taxon>Mammalia</taxon>
        <taxon>Eutheria</taxon>
        <taxon>Euarchontoglires</taxon>
        <taxon>Primates</taxon>
        <taxon>Haplorrhini</taxon>
        <taxon>Catarrhini</taxon>
        <taxon>Hominidae</taxon>
        <taxon>Homo</taxon>
    </lineage>
</organism>
<dbReference type="EMBL" id="BK000950">
    <property type="protein sequence ID" value="DAA00396.1"/>
    <property type="molecule type" value="Genomic_DNA"/>
</dbReference>
<dbReference type="EMBL" id="AK074611">
    <property type="protein sequence ID" value="BAC11088.1"/>
    <property type="molecule type" value="mRNA"/>
</dbReference>
<dbReference type="EMBL" id="AK091256">
    <property type="protein sequence ID" value="BAG52319.1"/>
    <property type="molecule type" value="mRNA"/>
</dbReference>
<dbReference type="EMBL" id="AK291303">
    <property type="protein sequence ID" value="BAF83992.1"/>
    <property type="molecule type" value="mRNA"/>
</dbReference>
<dbReference type="EMBL" id="AK296579">
    <property type="protein sequence ID" value="BAG59199.1"/>
    <property type="molecule type" value="mRNA"/>
</dbReference>
<dbReference type="EMBL" id="AK315091">
    <property type="protein sequence ID" value="BAG37556.1"/>
    <property type="molecule type" value="mRNA"/>
</dbReference>
<dbReference type="EMBL" id="CH471096">
    <property type="protein sequence ID" value="EAW62933.1"/>
    <property type="molecule type" value="Genomic_DNA"/>
</dbReference>
<dbReference type="EMBL" id="BC001252">
    <property type="protein sequence ID" value="AAH01252.2"/>
    <property type="molecule type" value="mRNA"/>
</dbReference>
<dbReference type="EMBL" id="BC064394">
    <property type="protein sequence ID" value="AAH64394.1"/>
    <property type="molecule type" value="mRNA"/>
</dbReference>
<dbReference type="EMBL" id="AY364250">
    <property type="protein sequence ID" value="AAQ76809.1"/>
    <property type="molecule type" value="mRNA"/>
</dbReference>
<dbReference type="EMBL" id="AL390156">
    <property type="protein sequence ID" value="CAB99092.1"/>
    <property type="molecule type" value="mRNA"/>
</dbReference>
<dbReference type="CCDS" id="CCDS11937.1">
    <molecule id="Q7RTS9-1"/>
</dbReference>
<dbReference type="CCDS" id="CCDS92459.1">
    <molecule id="Q7RTS9-2"/>
</dbReference>
<dbReference type="RefSeq" id="NP_001361371.1">
    <molecule id="Q7RTS9-2"/>
    <property type="nucleotide sequence ID" value="NM_001374442.1"/>
</dbReference>
<dbReference type="RefSeq" id="NP_060123.3">
    <molecule id="Q7RTS9-1"/>
    <property type="nucleotide sequence ID" value="NM_017653.3"/>
</dbReference>
<dbReference type="BioGRID" id="120165">
    <property type="interactions" value="169"/>
</dbReference>
<dbReference type="ELM" id="Q7RTS9"/>
<dbReference type="FunCoup" id="Q7RTS9">
    <property type="interactions" value="2868"/>
</dbReference>
<dbReference type="IntAct" id="Q7RTS9">
    <property type="interactions" value="73"/>
</dbReference>
<dbReference type="STRING" id="9606.ENSP00000269445"/>
<dbReference type="GlyCosmos" id="Q7RTS9">
    <property type="glycosylation" value="2 sites, 1 glycan"/>
</dbReference>
<dbReference type="GlyGen" id="Q7RTS9">
    <property type="glycosylation" value="4 sites, 5 N-linked glycans (1 site), 2 O-linked glycans (3 sites)"/>
</dbReference>
<dbReference type="iPTMnet" id="Q7RTS9"/>
<dbReference type="PhosphoSitePlus" id="Q7RTS9"/>
<dbReference type="BioMuta" id="DYM"/>
<dbReference type="DMDM" id="68565365"/>
<dbReference type="jPOST" id="Q7RTS9"/>
<dbReference type="MassIVE" id="Q7RTS9"/>
<dbReference type="PaxDb" id="9606-ENSP00000269445"/>
<dbReference type="PeptideAtlas" id="Q7RTS9"/>
<dbReference type="ProteomicsDB" id="68896">
    <molecule id="Q7RTS9-1"/>
</dbReference>
<dbReference type="ProteomicsDB" id="68897">
    <molecule id="Q7RTS9-2"/>
</dbReference>
<dbReference type="Pumba" id="Q7RTS9"/>
<dbReference type="Antibodypedia" id="22572">
    <property type="antibodies" value="126 antibodies from 21 providers"/>
</dbReference>
<dbReference type="DNASU" id="54808"/>
<dbReference type="Ensembl" id="ENST00000269445.10">
    <molecule id="Q7RTS9-1"/>
    <property type="protein sequence ID" value="ENSP00000269445.6"/>
    <property type="gene ID" value="ENSG00000141627.14"/>
</dbReference>
<dbReference type="Ensembl" id="ENST00000442713.6">
    <molecule id="Q7RTS9-2"/>
    <property type="protein sequence ID" value="ENSP00000395942.2"/>
    <property type="gene ID" value="ENSG00000141627.14"/>
</dbReference>
<dbReference type="GeneID" id="54808"/>
<dbReference type="KEGG" id="hsa:54808"/>
<dbReference type="UCSC" id="uc002ldi.2">
    <molecule id="Q7RTS9-1"/>
    <property type="organism name" value="human"/>
</dbReference>
<dbReference type="AGR" id="HGNC:21317"/>
<dbReference type="CTD" id="54808"/>
<dbReference type="DisGeNET" id="54808"/>
<dbReference type="GeneCards" id="DYM"/>
<dbReference type="HGNC" id="HGNC:21317">
    <property type="gene designation" value="DYM"/>
</dbReference>
<dbReference type="HPA" id="ENSG00000141627">
    <property type="expression patterns" value="Low tissue specificity"/>
</dbReference>
<dbReference type="MalaCards" id="DYM"/>
<dbReference type="MIM" id="223800">
    <property type="type" value="phenotype"/>
</dbReference>
<dbReference type="MIM" id="607326">
    <property type="type" value="phenotype"/>
</dbReference>
<dbReference type="MIM" id="607461">
    <property type="type" value="gene"/>
</dbReference>
<dbReference type="neXtProt" id="NX_Q7RTS9"/>
<dbReference type="OpenTargets" id="ENSG00000141627"/>
<dbReference type="Orphanet" id="239">
    <property type="disease" value="Dyggve-Melchior-Clausen disease"/>
</dbReference>
<dbReference type="Orphanet" id="178355">
    <property type="disease" value="Smith-McCort dysplasia"/>
</dbReference>
<dbReference type="PharmGKB" id="PA134879547"/>
<dbReference type="VEuPathDB" id="HostDB:ENSG00000141627"/>
<dbReference type="eggNOG" id="KOG2225">
    <property type="taxonomic scope" value="Eukaryota"/>
</dbReference>
<dbReference type="GeneTree" id="ENSGT00390000008772"/>
<dbReference type="HOGENOM" id="CLU_013309_2_0_1"/>
<dbReference type="InParanoid" id="Q7RTS9"/>
<dbReference type="OrthoDB" id="10253409at2759"/>
<dbReference type="PAN-GO" id="Q7RTS9">
    <property type="GO annotations" value="2 GO annotations based on evolutionary models"/>
</dbReference>
<dbReference type="PhylomeDB" id="Q7RTS9"/>
<dbReference type="TreeFam" id="TF314870"/>
<dbReference type="PathwayCommons" id="Q7RTS9"/>
<dbReference type="SignaLink" id="Q7RTS9"/>
<dbReference type="BioGRID-ORCS" id="54808">
    <property type="hits" value="17 hits in 1164 CRISPR screens"/>
</dbReference>
<dbReference type="ChiTaRS" id="DYM">
    <property type="organism name" value="human"/>
</dbReference>
<dbReference type="GeneWiki" id="DYM"/>
<dbReference type="GenomeRNAi" id="54808"/>
<dbReference type="Pharos" id="Q7RTS9">
    <property type="development level" value="Tbio"/>
</dbReference>
<dbReference type="PRO" id="PR:Q7RTS9"/>
<dbReference type="Proteomes" id="UP000005640">
    <property type="component" value="Chromosome 18"/>
</dbReference>
<dbReference type="RNAct" id="Q7RTS9">
    <property type="molecule type" value="protein"/>
</dbReference>
<dbReference type="Bgee" id="ENSG00000141627">
    <property type="expression patterns" value="Expressed in bone marrow cell and 180 other cell types or tissues"/>
</dbReference>
<dbReference type="ExpressionAtlas" id="Q7RTS9">
    <property type="expression patterns" value="baseline and differential"/>
</dbReference>
<dbReference type="GO" id="GO:0005737">
    <property type="term" value="C:cytoplasm"/>
    <property type="evidence" value="ECO:0000314"/>
    <property type="project" value="UniProtKB"/>
</dbReference>
<dbReference type="GO" id="GO:0005794">
    <property type="term" value="C:Golgi apparatus"/>
    <property type="evidence" value="ECO:0000314"/>
    <property type="project" value="HPA"/>
</dbReference>
<dbReference type="GO" id="GO:0016020">
    <property type="term" value="C:membrane"/>
    <property type="evidence" value="ECO:0007669"/>
    <property type="project" value="UniProtKB-SubCell"/>
</dbReference>
<dbReference type="GO" id="GO:0019899">
    <property type="term" value="F:enzyme binding"/>
    <property type="evidence" value="ECO:0000353"/>
    <property type="project" value="UniProtKB"/>
</dbReference>
<dbReference type="GO" id="GO:0060348">
    <property type="term" value="P:bone development"/>
    <property type="evidence" value="ECO:0000315"/>
    <property type="project" value="UniProtKB"/>
</dbReference>
<dbReference type="GO" id="GO:0007030">
    <property type="term" value="P:Golgi organization"/>
    <property type="evidence" value="ECO:0000315"/>
    <property type="project" value="UniProtKB"/>
</dbReference>
<dbReference type="InterPro" id="IPR019142">
    <property type="entry name" value="Dymeclin"/>
</dbReference>
<dbReference type="PANTHER" id="PTHR12895">
    <property type="entry name" value="DYMECLIN"/>
    <property type="match status" value="1"/>
</dbReference>
<dbReference type="PANTHER" id="PTHR12895:SF9">
    <property type="entry name" value="DYMECLIN"/>
    <property type="match status" value="1"/>
</dbReference>
<dbReference type="Pfam" id="PF09742">
    <property type="entry name" value="Dymeclin"/>
    <property type="match status" value="1"/>
</dbReference>
<keyword id="KW-0025">Alternative splicing</keyword>
<keyword id="KW-0963">Cytoplasm</keyword>
<keyword id="KW-0225">Disease variant</keyword>
<keyword id="KW-0242">Dwarfism</keyword>
<keyword id="KW-0333">Golgi apparatus</keyword>
<keyword id="KW-0449">Lipoprotein</keyword>
<keyword id="KW-0472">Membrane</keyword>
<keyword id="KW-0519">Myristate</keyword>
<keyword id="KW-1267">Proteomics identification</keyword>
<keyword id="KW-1185">Reference proteome</keyword>
<accession>Q7RTS9</accession>
<accession>A8K5I8</accession>
<accession>B2RCF9</accession>
<accession>B4DKI7</accession>
<accession>Q3ZTS8</accession>
<accession>Q6P2P5</accession>
<accession>Q8N2M0</accession>
<accession>Q9BVE9</accession>
<accession>Q9NPU7</accession>
<sequence length="669" mass="75935">MGSNSSRIGDLPKNEYLKKLSGTESISENDPFWNQLLSFSFPAPTSSSELKLLEEATISVCRSLVENNPRTGNLGALIKVFLSRTKELKLSAECQNHIFIWQTHNALFIICCLLKVFICQMSEEELQLHFTYEEKSPGNYSSDSEDLLEELLCCLMQLITDIPLLDITYEISVEAISTMVVFLSCQLFHKEVLRQSISHKYLMRGPCLPYTSKLVKTLLYNFIRQEKPPPPGAHVFPQQSDGGGLLYGLASGVATGLWTVFTLGGVGSKAAASPELSSPLANQSLLLLLVLANLTDASDAPNPYRQAIMSFKNTQDSSPFPSSIPHAFQINFNSLYTALCEQQTSDQATLLLYTLLHQNSNIRTYMLARTDMENLVLPILEILYHVEERNSHHVYMALIILLILTEDDGFNRSIHEVILKNITWYSERVLTEISLGSLLILVVIRTIQYNMTRTRDKYLHTNCLAALANMSAQFRSLHQYAAQRIISLFSLLSKKHNKVLEQATQSLRGSLSSNDVPLPDYAQDLNVIEEVIRMMLEIINSCLTNSLHHNPNLVYALLYKRDLFEQFRTHPSFQDIMQNIDLVISFFSSRLLQAGAELSVERVLEIIKQGVVALPKDRLKKFPELKFKYVEEEQPEEFFIPYVWSLVYNSAVGLYWNPQDIQLFTMDSD</sequence>
<gene>
    <name type="primary">DYM</name>
</gene>
<name>DYM_HUMAN</name>
<comment type="function">
    <text evidence="5">Necessary for correct organization of Golgi apparatus. Involved in bone development.</text>
</comment>
<comment type="subunit">
    <text evidence="5">Interacts with GOLM1 and PPIB.</text>
</comment>
<comment type="interaction">
    <interactant intactId="EBI-2871106">
        <id>Q7RTS9</id>
    </interactant>
    <interactant intactId="EBI-712073">
        <id>Q8NBJ4</id>
        <label>GOLM1</label>
    </interactant>
    <organismsDiffer>false</organismsDiffer>
    <experiments>3</experiments>
</comment>
<comment type="interaction">
    <interactant intactId="EBI-2871106">
        <id>Q7RTS9</id>
    </interactant>
    <interactant intactId="EBI-359252">
        <id>P23284</id>
        <label>PPIB</label>
    </interactant>
    <organismsDiffer>false</organismsDiffer>
    <experiments>4</experiments>
</comment>
<comment type="subcellular location">
    <subcellularLocation>
        <location>Cytoplasm</location>
    </subcellularLocation>
    <subcellularLocation>
        <location>Golgi apparatus</location>
    </subcellularLocation>
    <subcellularLocation>
        <location evidence="8">Membrane</location>
        <topology evidence="8">Lipid-anchor</topology>
    </subcellularLocation>
    <text>Sequence analysis programs clearly predict 1 transmembrane region. However, PubMed:18996921 shows that it is not a stably anchored transmembrane protein but it weakly associates with the Golgi apparatus and shuttles between the Golgi and the cytosol.</text>
</comment>
<comment type="alternative products">
    <event type="alternative splicing"/>
    <isoform>
        <id>Q7RTS9-1</id>
        <name>1</name>
        <sequence type="displayed"/>
    </isoform>
    <isoform>
        <id>Q7RTS9-2</id>
        <name>2</name>
        <sequence type="described" ref="VSP_036442 VSP_036443"/>
    </isoform>
</comment>
<comment type="tissue specificity">
    <text evidence="2 3">Expressed in most embryo-fetal and adult tissues. Abundant in primary chondrocytes, osteoblasts, cerebellum, kidney, lung, stomach, heart, pancreas and fetal brain. Very low or no expression in the spleen, thymus, esophagus, bladder and thyroid gland.</text>
</comment>
<comment type="PTM">
    <text evidence="3">Myristoylated in vitro; myristoylation is not essential for protein targeting to Golgi compartment.</text>
</comment>
<comment type="disease" evidence="1 2 3">
    <disease id="DI-00406">
        <name>Dyggve-Melchior-Clausen syndrome</name>
        <acronym>DMC</acronym>
        <description>A rare autosomal recessive disorder belonging to the group of spondyloepimetaphyseal dysplasias. DMC is characterized by progressive short stature with short trunk dwarfism, microcephaly, protruding sternum, and psychomotor retardation. Radiological features include a platyspondyly with double vertebral humps, an epiphyso-metaphyseal dysplasia and lacy pelvis iliac crests.</description>
        <dbReference type="MIM" id="223800"/>
    </disease>
    <text>The disease is caused by variants affecting the gene represented in this entry.</text>
</comment>
<comment type="disease" evidence="1 3 4">
    <disease id="DI-01034">
        <name>Smith-McCort dysplasia 1</name>
        <acronym>SMC1</acronym>
        <description>A rare autosomal recessive osteochondrodysplasia with skeletal features identical to those of Dyggve-Melchior-Clausen syndrome, but with normal intelligence and no microcephaly. It is characterized by short limbs and trunk with barrel-shaped chest. The radiographic phenotype includes platyspondyly, generalized abnormalities of the epiphyses and metaphyses, and a distinctive lacy appearance of the iliac crest.</description>
        <dbReference type="MIM" id="607326"/>
    </disease>
    <text>The disease is caused by variants affecting the gene represented in this entry.</text>
</comment>
<comment type="similarity">
    <text evidence="8">Belongs to the dymeclin family.</text>
</comment>
<protein>
    <recommendedName>
        <fullName>Dymeclin</fullName>
    </recommendedName>
    <alternativeName>
        <fullName>Dyggve-Melchior-Clausen syndrome protein</fullName>
    </alternativeName>
</protein>
<feature type="initiator methionine" description="Removed" evidence="6">
    <location>
        <position position="1"/>
    </location>
</feature>
<feature type="chain" id="PRO_0000086883" description="Dymeclin">
    <location>
        <begin position="2"/>
        <end position="669"/>
    </location>
</feature>
<feature type="lipid moiety-binding region" description="N-myristoyl glycine" evidence="6 9">
    <location>
        <position position="2"/>
    </location>
</feature>
<feature type="splice variant" id="VSP_036442" description="In isoform 2." evidence="7">
    <original>V</original>
    <variation>A</variation>
    <location>
        <position position="65"/>
    </location>
</feature>
<feature type="splice variant" id="VSP_036443" description="In isoform 2." evidence="7">
    <location>
        <begin position="66"/>
        <end position="255"/>
    </location>
</feature>
<feature type="sequence variant" id="VAR_022740" description="In SMC1; does not affect protein localization; dbSNP:rs120074164." evidence="1 3">
    <original>E</original>
    <variation>K</variation>
    <location>
        <position position="87"/>
    </location>
</feature>
<feature type="sequence variant" id="VAR_054499" description="In DMC; results in protein mis-localization and aggregation; dbSNP:rs120074163." evidence="1 3">
    <original>N</original>
    <variation>Y</variation>
    <location>
        <position position="469"/>
    </location>
</feature>
<feature type="sequence variant" id="VAR_065293" description="In SMC1; dbSNP:rs120074165." evidence="4">
    <original>C</original>
    <variation>R</variation>
    <location>
        <position position="542"/>
    </location>
</feature>
<feature type="mutagenesis site" description="Does not affect protein localization to Golgi apparatus. Prevents myristoylation in vitro." evidence="3">
    <original>G</original>
    <variation>A</variation>
    <location>
        <position position="2"/>
    </location>
</feature>
<feature type="sequence conflict" description="In Ref. 2; BAC11088." evidence="8" ref="2">
    <original>E</original>
    <variation>K</variation>
    <location>
        <position position="66"/>
    </location>
</feature>
<feature type="sequence conflict" description="In Ref. 2; BAC11088." evidence="8" ref="2">
    <original>L</original>
    <variation>P</variation>
    <location>
        <position position="249"/>
    </location>
</feature>
<feature type="sequence conflict" description="In Ref. 3; BAF83992." evidence="8" ref="3">
    <original>E</original>
    <variation>G</variation>
    <location>
        <position position="381"/>
    </location>
</feature>
<feature type="sequence conflict" description="In Ref. 4; AAH64394." evidence="8" ref="4">
    <original>D</original>
    <variation>Y</variation>
    <location>
        <position position="408"/>
    </location>
</feature>
<feature type="sequence conflict" description="In Ref. 3; BAF83992." evidence="8" ref="3">
    <original>R</original>
    <variation>K</variation>
    <location>
        <position position="453"/>
    </location>
</feature>
<feature type="sequence conflict" description="In Ref. 3; BAF83992." evidence="8" ref="3">
    <original>E</original>
    <variation>G</variation>
    <location>
        <position position="537"/>
    </location>
</feature>
<evidence type="ECO:0000269" key="1">
    <source>
    </source>
</evidence>
<evidence type="ECO:0000269" key="2">
    <source>
    </source>
</evidence>
<evidence type="ECO:0000269" key="3">
    <source>
    </source>
</evidence>
<evidence type="ECO:0000269" key="4">
    <source>
    </source>
</evidence>
<evidence type="ECO:0000269" key="5">
    <source>
    </source>
</evidence>
<evidence type="ECO:0000269" key="6">
    <source>
    </source>
</evidence>
<evidence type="ECO:0000303" key="7">
    <source>
    </source>
</evidence>
<evidence type="ECO:0000305" key="8"/>
<evidence type="ECO:0000305" key="9">
    <source>
    </source>
</evidence>